<gene>
    <name type="ordered locus">TK2294</name>
</gene>
<keyword id="KW-1185">Reference proteome</keyword>
<protein>
    <recommendedName>
        <fullName evidence="1">UPF0128 protein TK2294</fullName>
    </recommendedName>
</protein>
<feature type="chain" id="PRO_0000365296" description="UPF0128 protein TK2294">
    <location>
        <begin position="1"/>
        <end position="222"/>
    </location>
</feature>
<dbReference type="EMBL" id="AP006878">
    <property type="protein sequence ID" value="BAD86483.1"/>
    <property type="molecule type" value="Genomic_DNA"/>
</dbReference>
<dbReference type="RefSeq" id="WP_011251244.1">
    <property type="nucleotide sequence ID" value="NC_006624.1"/>
</dbReference>
<dbReference type="STRING" id="69014.TK2294"/>
<dbReference type="EnsemblBacteria" id="BAD86483">
    <property type="protein sequence ID" value="BAD86483"/>
    <property type="gene ID" value="TK2294"/>
</dbReference>
<dbReference type="GeneID" id="78448839"/>
<dbReference type="KEGG" id="tko:TK2294"/>
<dbReference type="PATRIC" id="fig|69014.16.peg.2249"/>
<dbReference type="eggNOG" id="arCOG05084">
    <property type="taxonomic scope" value="Archaea"/>
</dbReference>
<dbReference type="HOGENOM" id="CLU_1243079_0_0_2"/>
<dbReference type="InParanoid" id="Q5JDC5"/>
<dbReference type="OrthoDB" id="84574at2157"/>
<dbReference type="PhylomeDB" id="Q5JDC5"/>
<dbReference type="Proteomes" id="UP000000536">
    <property type="component" value="Chromosome"/>
</dbReference>
<dbReference type="HAMAP" id="MF_00264">
    <property type="entry name" value="UPF0128"/>
    <property type="match status" value="1"/>
</dbReference>
<dbReference type="InterPro" id="IPR005266">
    <property type="entry name" value="UPF0128"/>
</dbReference>
<dbReference type="NCBIfam" id="TIGR00703">
    <property type="entry name" value="TIGR00703 family protein"/>
    <property type="match status" value="1"/>
</dbReference>
<dbReference type="Pfam" id="PF03673">
    <property type="entry name" value="UPF0128"/>
    <property type="match status" value="1"/>
</dbReference>
<dbReference type="PIRSF" id="PIRSF016179">
    <property type="entry name" value="UCP016179"/>
    <property type="match status" value="1"/>
</dbReference>
<sequence>MLEGYYIVENTGVVPAERRFKFKDLKAWGYDLHLGTIDGREAYFVSKAGTREEGETYTEGGKEYHISETQKEIPKNARLLARIVIEKGQPYLEFWLDTEDGNFPLAKEDPRLILHRFWTEKKFNQLEKHVGSVGLTTDFFKDRVFVKSIPLPYEEYPPKVRRVLREVRDVHRDLTGFGRFVFQYFGEEDKTHQYRLWWLLPTIHLFDVEVSNEVDKILAMLD</sequence>
<accession>Q5JDC5</accession>
<comment type="similarity">
    <text evidence="1">Belongs to the UPF0128 family.</text>
</comment>
<reference key="1">
    <citation type="journal article" date="2005" name="Genome Res.">
        <title>Complete genome sequence of the hyperthermophilic archaeon Thermococcus kodakaraensis KOD1 and comparison with Pyrococcus genomes.</title>
        <authorList>
            <person name="Fukui T."/>
            <person name="Atomi H."/>
            <person name="Kanai T."/>
            <person name="Matsumi R."/>
            <person name="Fujiwara S."/>
            <person name="Imanaka T."/>
        </authorList>
    </citation>
    <scope>NUCLEOTIDE SEQUENCE [LARGE SCALE GENOMIC DNA]</scope>
    <source>
        <strain>ATCC BAA-918 / JCM 12380 / KOD1</strain>
    </source>
</reference>
<evidence type="ECO:0000255" key="1">
    <source>
        <dbReference type="HAMAP-Rule" id="MF_00264"/>
    </source>
</evidence>
<name>Y2294_THEKO</name>
<organism>
    <name type="scientific">Thermococcus kodakarensis (strain ATCC BAA-918 / JCM 12380 / KOD1)</name>
    <name type="common">Pyrococcus kodakaraensis (strain KOD1)</name>
    <dbReference type="NCBI Taxonomy" id="69014"/>
    <lineage>
        <taxon>Archaea</taxon>
        <taxon>Methanobacteriati</taxon>
        <taxon>Methanobacteriota</taxon>
        <taxon>Thermococci</taxon>
        <taxon>Thermococcales</taxon>
        <taxon>Thermococcaceae</taxon>
        <taxon>Thermococcus</taxon>
    </lineage>
</organism>
<proteinExistence type="inferred from homology"/>